<feature type="transit peptide" description="Mitochondrion" evidence="4">
    <location>
        <begin position="1"/>
        <end position="35"/>
    </location>
</feature>
<feature type="chain" id="PRO_0000306092" description="Acyl-coenzyme A synthetase ACSM1, mitochondrial">
    <location>
        <begin position="36"/>
        <end position="573"/>
    </location>
</feature>
<feature type="binding site" evidence="1">
    <location>
        <begin position="222"/>
        <end position="230"/>
    </location>
    <ligand>
        <name>ATP</name>
        <dbReference type="ChEBI" id="CHEBI:30616"/>
    </ligand>
</feature>
<feature type="binding site" evidence="1">
    <location>
        <position position="448"/>
    </location>
    <ligand>
        <name>ATP</name>
        <dbReference type="ChEBI" id="CHEBI:30616"/>
    </ligand>
</feature>
<feature type="binding site" evidence="1">
    <location>
        <position position="463"/>
    </location>
    <ligand>
        <name>ATP</name>
        <dbReference type="ChEBI" id="CHEBI:30616"/>
    </ligand>
</feature>
<feature type="binding site" evidence="1">
    <location>
        <position position="559"/>
    </location>
    <ligand>
        <name>ATP</name>
        <dbReference type="ChEBI" id="CHEBI:30616"/>
    </ligand>
</feature>
<feature type="modified residue" description="N6-succinyllysine" evidence="13">
    <location>
        <position position="81"/>
    </location>
</feature>
<feature type="modified residue" description="N6-acetyllysine; alternate" evidence="12">
    <location>
        <position position="142"/>
    </location>
</feature>
<feature type="modified residue" description="N6-succinyllysine; alternate" evidence="13">
    <location>
        <position position="142"/>
    </location>
</feature>
<feature type="modified residue" description="N6-succinyllysine" evidence="13">
    <location>
        <position position="179"/>
    </location>
</feature>
<feature type="modified residue" description="N6-acetyllysine; alternate" evidence="12">
    <location>
        <position position="200"/>
    </location>
</feature>
<feature type="modified residue" description="N6-succinyllysine; alternate" evidence="13">
    <location>
        <position position="200"/>
    </location>
</feature>
<feature type="modified residue" description="N6-acetyllysine" evidence="12">
    <location>
        <position position="210"/>
    </location>
</feature>
<feature type="modified residue" description="N6-succinyllysine" evidence="13">
    <location>
        <position position="233"/>
    </location>
</feature>
<feature type="modified residue" description="N6-succinyllysine" evidence="13">
    <location>
        <position position="324"/>
    </location>
</feature>
<feature type="modified residue" description="N6-acetyllysine; alternate" evidence="12">
    <location>
        <position position="352"/>
    </location>
</feature>
<feature type="modified residue" description="N6-succinyllysine; alternate" evidence="13">
    <location>
        <position position="352"/>
    </location>
</feature>
<feature type="modified residue" description="N6-acetyllysine; alternate" evidence="12">
    <location>
        <position position="387"/>
    </location>
</feature>
<feature type="modified residue" description="N6-succinyllysine; alternate" evidence="13">
    <location>
        <position position="387"/>
    </location>
</feature>
<feature type="modified residue" description="N6-succinyllysine" evidence="13">
    <location>
        <position position="501"/>
    </location>
</feature>
<feature type="modified residue" description="N6-acetyllysine" evidence="12">
    <location>
        <position position="527"/>
    </location>
</feature>
<feature type="modified residue" description="N6-acetyllysine; alternate" evidence="12">
    <location>
        <position position="534"/>
    </location>
</feature>
<feature type="modified residue" description="N6-succinyllysine; alternate" evidence="13">
    <location>
        <position position="534"/>
    </location>
</feature>
<feature type="modified residue" description="N6-acetyllysine" evidence="12">
    <location>
        <position position="545"/>
    </location>
</feature>
<feature type="splice variant" id="VSP_028392" description="In isoform 2." evidence="8">
    <location>
        <begin position="369"/>
        <end position="395"/>
    </location>
</feature>
<feature type="sequence conflict" description="In Ref. 2; BAE28977." evidence="9" ref="2">
    <original>D</original>
    <variation>V</variation>
    <location>
        <position position="465"/>
    </location>
</feature>
<feature type="sequence conflict" description="In Ref. 2; BAE28977." evidence="9" ref="2">
    <original>L</original>
    <variation>F</variation>
    <location>
        <position position="525"/>
    </location>
</feature>
<keyword id="KW-0007">Acetylation</keyword>
<keyword id="KW-0025">Alternative splicing</keyword>
<keyword id="KW-0067">ATP-binding</keyword>
<keyword id="KW-0903">Direct protein sequencing</keyword>
<keyword id="KW-0276">Fatty acid metabolism</keyword>
<keyword id="KW-0342">GTP-binding</keyword>
<keyword id="KW-0436">Ligase</keyword>
<keyword id="KW-0443">Lipid metabolism</keyword>
<keyword id="KW-0460">Magnesium</keyword>
<keyword id="KW-0479">Metal-binding</keyword>
<keyword id="KW-0496">Mitochondrion</keyword>
<keyword id="KW-0547">Nucleotide-binding</keyword>
<keyword id="KW-1185">Reference proteome</keyword>
<keyword id="KW-0809">Transit peptide</keyword>
<comment type="function">
    <text evidence="3 5 6">Catalyzes the activation of fatty acids by CoA to produce an acyl-CoA, the first step in fatty acid metabolism (PubMed:11470804, PubMed:12709059). Capable of activating medium-chain fatty acids (e.g. butyric (C4) to decanoic (C10) acids), and certain carboxylate-containing xenobiotics, e.g. benzoate (PubMed:11470804, PubMed:12709059). Also catalyzes the activation of lipoate to lipoyl-nucleoside monophosphate (By similarity). Activates lipoate with GTP at a 1000-fold higher rate than with ATP and activates both (R)- and (S)-lipoate to the respective lipoyl-GMP, with a preference for (R)-lipoate (By similarity).</text>
</comment>
<comment type="catalytic activity">
    <reaction evidence="5 6">
        <text>a medium-chain fatty acid + ATP + CoA = a medium-chain fatty acyl-CoA + AMP + diphosphate</text>
        <dbReference type="Rhea" id="RHEA:48340"/>
        <dbReference type="ChEBI" id="CHEBI:30616"/>
        <dbReference type="ChEBI" id="CHEBI:33019"/>
        <dbReference type="ChEBI" id="CHEBI:57287"/>
        <dbReference type="ChEBI" id="CHEBI:59558"/>
        <dbReference type="ChEBI" id="CHEBI:90546"/>
        <dbReference type="ChEBI" id="CHEBI:456215"/>
        <dbReference type="EC" id="6.2.1.2"/>
    </reaction>
    <physiologicalReaction direction="left-to-right" evidence="10 11">
        <dbReference type="Rhea" id="RHEA:48341"/>
    </physiologicalReaction>
</comment>
<comment type="catalytic activity">
    <reaction evidence="5 6">
        <text>benzoate + ATP + CoA = benzoyl-CoA + AMP + diphosphate</text>
        <dbReference type="Rhea" id="RHEA:10132"/>
        <dbReference type="ChEBI" id="CHEBI:16150"/>
        <dbReference type="ChEBI" id="CHEBI:30616"/>
        <dbReference type="ChEBI" id="CHEBI:33019"/>
        <dbReference type="ChEBI" id="CHEBI:57287"/>
        <dbReference type="ChEBI" id="CHEBI:57369"/>
        <dbReference type="ChEBI" id="CHEBI:456215"/>
        <dbReference type="EC" id="6.2.1.25"/>
    </reaction>
    <physiologicalReaction direction="left-to-right" evidence="10 11">
        <dbReference type="Rhea" id="RHEA:10133"/>
    </physiologicalReaction>
</comment>
<comment type="catalytic activity">
    <reaction evidence="3">
        <text>(R)-lipoate + GTP + H(+) = (R)-lipoyl-GMP + diphosphate</text>
        <dbReference type="Rhea" id="RHEA:46700"/>
        <dbReference type="ChEBI" id="CHEBI:15378"/>
        <dbReference type="ChEBI" id="CHEBI:33019"/>
        <dbReference type="ChEBI" id="CHEBI:37565"/>
        <dbReference type="ChEBI" id="CHEBI:83088"/>
        <dbReference type="ChEBI" id="CHEBI:86460"/>
    </reaction>
    <physiologicalReaction direction="left-to-right" evidence="3">
        <dbReference type="Rhea" id="RHEA:46701"/>
    </physiologicalReaction>
</comment>
<comment type="catalytic activity">
    <reaction evidence="5 6">
        <text>octanoate + ATP + CoA = octanoyl-CoA + AMP + diphosphate</text>
        <dbReference type="Rhea" id="RHEA:33631"/>
        <dbReference type="ChEBI" id="CHEBI:25646"/>
        <dbReference type="ChEBI" id="CHEBI:30616"/>
        <dbReference type="ChEBI" id="CHEBI:33019"/>
        <dbReference type="ChEBI" id="CHEBI:57287"/>
        <dbReference type="ChEBI" id="CHEBI:57386"/>
        <dbReference type="ChEBI" id="CHEBI:456215"/>
    </reaction>
    <physiologicalReaction direction="left-to-right" evidence="10 11">
        <dbReference type="Rhea" id="RHEA:33632"/>
    </physiologicalReaction>
</comment>
<comment type="catalytic activity">
    <reaction evidence="5 6">
        <text>decanoate + ATP + CoA = decanoyl-CoA + AMP + diphosphate</text>
        <dbReference type="Rhea" id="RHEA:33627"/>
        <dbReference type="ChEBI" id="CHEBI:27689"/>
        <dbReference type="ChEBI" id="CHEBI:30616"/>
        <dbReference type="ChEBI" id="CHEBI:33019"/>
        <dbReference type="ChEBI" id="CHEBI:57287"/>
        <dbReference type="ChEBI" id="CHEBI:61430"/>
        <dbReference type="ChEBI" id="CHEBI:456215"/>
    </reaction>
    <physiologicalReaction direction="left-to-right" evidence="10 11">
        <dbReference type="Rhea" id="RHEA:33628"/>
    </physiologicalReaction>
</comment>
<comment type="catalytic activity">
    <reaction evidence="5 6">
        <text>dodecanoate + ATP + CoA = dodecanoyl-CoA + AMP + diphosphate</text>
        <dbReference type="Rhea" id="RHEA:33623"/>
        <dbReference type="ChEBI" id="CHEBI:18262"/>
        <dbReference type="ChEBI" id="CHEBI:30616"/>
        <dbReference type="ChEBI" id="CHEBI:33019"/>
        <dbReference type="ChEBI" id="CHEBI:57287"/>
        <dbReference type="ChEBI" id="CHEBI:57375"/>
        <dbReference type="ChEBI" id="CHEBI:456215"/>
    </reaction>
    <physiologicalReaction direction="left-to-right" evidence="10 11">
        <dbReference type="Rhea" id="RHEA:33624"/>
    </physiologicalReaction>
</comment>
<comment type="catalytic activity">
    <reaction evidence="5">
        <text>tetradecanoate + ATP + CoA = tetradecanoyl-CoA + AMP + diphosphate</text>
        <dbReference type="Rhea" id="RHEA:33619"/>
        <dbReference type="ChEBI" id="CHEBI:30616"/>
        <dbReference type="ChEBI" id="CHEBI:30807"/>
        <dbReference type="ChEBI" id="CHEBI:33019"/>
        <dbReference type="ChEBI" id="CHEBI:57287"/>
        <dbReference type="ChEBI" id="CHEBI:57385"/>
        <dbReference type="ChEBI" id="CHEBI:456215"/>
    </reaction>
    <physiologicalReaction direction="left-to-right" evidence="10">
        <dbReference type="Rhea" id="RHEA:33620"/>
    </physiologicalReaction>
</comment>
<comment type="catalytic activity">
    <reaction evidence="5 6">
        <text>hexanoate + ATP + CoA = hexanoyl-CoA + AMP + diphosphate</text>
        <dbReference type="Rhea" id="RHEA:43740"/>
        <dbReference type="ChEBI" id="CHEBI:17120"/>
        <dbReference type="ChEBI" id="CHEBI:30616"/>
        <dbReference type="ChEBI" id="CHEBI:33019"/>
        <dbReference type="ChEBI" id="CHEBI:57287"/>
        <dbReference type="ChEBI" id="CHEBI:62620"/>
        <dbReference type="ChEBI" id="CHEBI:456215"/>
    </reaction>
    <physiologicalReaction direction="left-to-right" evidence="10 11">
        <dbReference type="Rhea" id="RHEA:43741"/>
    </physiologicalReaction>
</comment>
<comment type="catalytic activity">
    <reaction evidence="6">
        <text>butanoate + ATP + CoA = butanoyl-CoA + AMP + diphosphate</text>
        <dbReference type="Rhea" id="RHEA:46172"/>
        <dbReference type="ChEBI" id="CHEBI:17968"/>
        <dbReference type="ChEBI" id="CHEBI:30616"/>
        <dbReference type="ChEBI" id="CHEBI:33019"/>
        <dbReference type="ChEBI" id="CHEBI:57287"/>
        <dbReference type="ChEBI" id="CHEBI:57371"/>
        <dbReference type="ChEBI" id="CHEBI:456215"/>
    </reaction>
    <physiologicalReaction direction="left-to-right" evidence="11">
        <dbReference type="Rhea" id="RHEA:46173"/>
    </physiologicalReaction>
</comment>
<comment type="catalytic activity">
    <reaction evidence="6">
        <text>hexadecanoate + ATP + CoA = hexadecanoyl-CoA + AMP + diphosphate</text>
        <dbReference type="Rhea" id="RHEA:30751"/>
        <dbReference type="ChEBI" id="CHEBI:7896"/>
        <dbReference type="ChEBI" id="CHEBI:30616"/>
        <dbReference type="ChEBI" id="CHEBI:33019"/>
        <dbReference type="ChEBI" id="CHEBI:57287"/>
        <dbReference type="ChEBI" id="CHEBI:57379"/>
        <dbReference type="ChEBI" id="CHEBI:456215"/>
    </reaction>
    <physiologicalReaction direction="left-to-right" evidence="11">
        <dbReference type="Rhea" id="RHEA:30752"/>
    </physiologicalReaction>
</comment>
<comment type="cofactor">
    <cofactor evidence="2">
        <name>Mg(2+)</name>
        <dbReference type="ChEBI" id="CHEBI:18420"/>
    </cofactor>
    <cofactor evidence="2">
        <name>Mn(2+)</name>
        <dbReference type="ChEBI" id="CHEBI:29035"/>
    </cofactor>
</comment>
<comment type="biophysicochemical properties">
    <kinetics>
        <KM evidence="5">1.58 mM for hexanoate</KM>
        <KM evidence="5">0.46 mM for octanoate</KM>
    </kinetics>
</comment>
<comment type="subunit">
    <text evidence="3">Monomer.</text>
</comment>
<comment type="subcellular location">
    <subcellularLocation>
        <location evidence="5">Mitochondrion matrix</location>
    </subcellularLocation>
    <subcellularLocation>
        <location evidence="6">Mitochondrion</location>
    </subcellularLocation>
</comment>
<comment type="alternative products">
    <event type="alternative splicing"/>
    <isoform>
        <id>Q91VA0-1</id>
        <name>1</name>
        <sequence type="displayed"/>
    </isoform>
    <isoform>
        <id>Q91VA0-2</id>
        <name>2</name>
        <sequence type="described" ref="VSP_028392"/>
    </isoform>
</comment>
<comment type="tissue specificity">
    <text evidence="5">Highly expressed in liver and kidney.</text>
</comment>
<comment type="similarity">
    <text evidence="9">Belongs to the ATP-dependent AMP-binding enzyme family.</text>
</comment>
<proteinExistence type="evidence at protein level"/>
<organism>
    <name type="scientific">Mus musculus</name>
    <name type="common">Mouse</name>
    <dbReference type="NCBI Taxonomy" id="10090"/>
    <lineage>
        <taxon>Eukaryota</taxon>
        <taxon>Metazoa</taxon>
        <taxon>Chordata</taxon>
        <taxon>Craniata</taxon>
        <taxon>Vertebrata</taxon>
        <taxon>Euteleostomi</taxon>
        <taxon>Mammalia</taxon>
        <taxon>Eutheria</taxon>
        <taxon>Euarchontoglires</taxon>
        <taxon>Glires</taxon>
        <taxon>Rodentia</taxon>
        <taxon>Myomorpha</taxon>
        <taxon>Muroidea</taxon>
        <taxon>Muridae</taxon>
        <taxon>Murinae</taxon>
        <taxon>Mus</taxon>
        <taxon>Mus</taxon>
    </lineage>
</organism>
<dbReference type="EC" id="6.2.1.2" evidence="5 6"/>
<dbReference type="EC" id="6.2.1.25" evidence="5 6"/>
<dbReference type="EMBL" id="AB059428">
    <property type="protein sequence ID" value="BAB64534.1"/>
    <property type="molecule type" value="mRNA"/>
</dbReference>
<dbReference type="EMBL" id="AK149550">
    <property type="protein sequence ID" value="BAE28952.1"/>
    <property type="molecule type" value="mRNA"/>
</dbReference>
<dbReference type="EMBL" id="AK149586">
    <property type="protein sequence ID" value="BAE28977.1"/>
    <property type="molecule type" value="mRNA"/>
</dbReference>
<dbReference type="EMBL" id="BC016414">
    <property type="protein sequence ID" value="AAH16414.1"/>
    <property type="molecule type" value="mRNA"/>
</dbReference>
<dbReference type="EMBL" id="BC022149">
    <property type="protein sequence ID" value="AAH22149.1"/>
    <property type="molecule type" value="mRNA"/>
</dbReference>
<dbReference type="CCDS" id="CCDS21783.1">
    <molecule id="Q91VA0-1"/>
</dbReference>
<dbReference type="RefSeq" id="NP_473435.1">
    <molecule id="Q91VA0-1"/>
    <property type="nucleotide sequence ID" value="NM_054094.6"/>
</dbReference>
<dbReference type="SMR" id="Q91VA0"/>
<dbReference type="FunCoup" id="Q91VA0">
    <property type="interactions" value="58"/>
</dbReference>
<dbReference type="STRING" id="10090.ENSMUSP00000036140"/>
<dbReference type="SwissLipids" id="SLP:000001205"/>
<dbReference type="GlyGen" id="Q91VA0">
    <property type="glycosylation" value="1 site, 1 O-linked glycan (1 site)"/>
</dbReference>
<dbReference type="iPTMnet" id="Q91VA0"/>
<dbReference type="PhosphoSitePlus" id="Q91VA0"/>
<dbReference type="SwissPalm" id="Q91VA0"/>
<dbReference type="jPOST" id="Q91VA0"/>
<dbReference type="PaxDb" id="10090-ENSMUSP00000036140"/>
<dbReference type="PeptideAtlas" id="Q91VA0"/>
<dbReference type="ProteomicsDB" id="285849">
    <molecule id="Q91VA0-1"/>
</dbReference>
<dbReference type="ProteomicsDB" id="285850">
    <molecule id="Q91VA0-2"/>
</dbReference>
<dbReference type="Antibodypedia" id="49877">
    <property type="antibodies" value="70 antibodies from 17 providers"/>
</dbReference>
<dbReference type="DNASU" id="117147"/>
<dbReference type="Ensembl" id="ENSMUST00000047929.13">
    <molecule id="Q91VA0-1"/>
    <property type="protein sequence ID" value="ENSMUSP00000036140.7"/>
    <property type="gene ID" value="ENSMUSG00000033533.15"/>
</dbReference>
<dbReference type="GeneID" id="117147"/>
<dbReference type="KEGG" id="mmu:117147"/>
<dbReference type="UCSC" id="uc009jlm.1">
    <molecule id="Q91VA0-1"/>
    <property type="organism name" value="mouse"/>
</dbReference>
<dbReference type="UCSC" id="uc012fsv.1">
    <molecule id="Q91VA0-2"/>
    <property type="organism name" value="mouse"/>
</dbReference>
<dbReference type="AGR" id="MGI:2152200"/>
<dbReference type="CTD" id="116285"/>
<dbReference type="MGI" id="MGI:2152200">
    <property type="gene designation" value="Acsm1"/>
</dbReference>
<dbReference type="VEuPathDB" id="HostDB:ENSMUSG00000033533"/>
<dbReference type="eggNOG" id="KOG1175">
    <property type="taxonomic scope" value="Eukaryota"/>
</dbReference>
<dbReference type="GeneTree" id="ENSGT00940000161138"/>
<dbReference type="InParanoid" id="Q91VA0"/>
<dbReference type="OMA" id="KTMDPMV"/>
<dbReference type="OrthoDB" id="6614653at2759"/>
<dbReference type="PhylomeDB" id="Q91VA0"/>
<dbReference type="TreeFam" id="TF354287"/>
<dbReference type="Reactome" id="R-MMU-177135">
    <property type="pathway name" value="Conjugation of benzoate with glycine"/>
</dbReference>
<dbReference type="Reactome" id="R-MMU-177162">
    <property type="pathway name" value="Conjugation of phenylacetate with glutamine"/>
</dbReference>
<dbReference type="BioGRID-ORCS" id="117147">
    <property type="hits" value="1 hit in 81 CRISPR screens"/>
</dbReference>
<dbReference type="PRO" id="PR:Q91VA0"/>
<dbReference type="Proteomes" id="UP000000589">
    <property type="component" value="Chromosome 7"/>
</dbReference>
<dbReference type="RNAct" id="Q91VA0">
    <property type="molecule type" value="protein"/>
</dbReference>
<dbReference type="Bgee" id="ENSMUSG00000033533">
    <property type="expression patterns" value="Expressed in right kidney and 37 other cell types or tissues"/>
</dbReference>
<dbReference type="ExpressionAtlas" id="Q91VA0">
    <property type="expression patterns" value="baseline and differential"/>
</dbReference>
<dbReference type="GO" id="GO:0005759">
    <property type="term" value="C:mitochondrial matrix"/>
    <property type="evidence" value="ECO:0000250"/>
    <property type="project" value="UniProtKB"/>
</dbReference>
<dbReference type="GO" id="GO:0005739">
    <property type="term" value="C:mitochondrion"/>
    <property type="evidence" value="ECO:0000314"/>
    <property type="project" value="UniProtKB"/>
</dbReference>
<dbReference type="GO" id="GO:0005524">
    <property type="term" value="F:ATP binding"/>
    <property type="evidence" value="ECO:0007669"/>
    <property type="project" value="UniProtKB-KW"/>
</dbReference>
<dbReference type="GO" id="GO:0018858">
    <property type="term" value="F:benzoate-CoA ligase activity"/>
    <property type="evidence" value="ECO:0000314"/>
    <property type="project" value="UniProtKB"/>
</dbReference>
<dbReference type="GO" id="GO:0102391">
    <property type="term" value="F:decanoate-CoA ligase activity"/>
    <property type="evidence" value="ECO:0000314"/>
    <property type="project" value="UniProtKB"/>
</dbReference>
<dbReference type="GO" id="GO:0015645">
    <property type="term" value="F:fatty acid ligase activity"/>
    <property type="evidence" value="ECO:0000314"/>
    <property type="project" value="UniProtKB"/>
</dbReference>
<dbReference type="GO" id="GO:0005525">
    <property type="term" value="F:GTP binding"/>
    <property type="evidence" value="ECO:0007669"/>
    <property type="project" value="UniProtKB-KW"/>
</dbReference>
<dbReference type="GO" id="GO:0004467">
    <property type="term" value="F:long-chain fatty acid-CoA ligase activity"/>
    <property type="evidence" value="ECO:0000250"/>
    <property type="project" value="UniProtKB"/>
</dbReference>
<dbReference type="GO" id="GO:0031956">
    <property type="term" value="F:medium-chain fatty acid-CoA ligase activity"/>
    <property type="evidence" value="ECO:0000314"/>
    <property type="project" value="UniProtKB"/>
</dbReference>
<dbReference type="GO" id="GO:0046872">
    <property type="term" value="F:metal ion binding"/>
    <property type="evidence" value="ECO:0007669"/>
    <property type="project" value="UniProtKB-KW"/>
</dbReference>
<dbReference type="GO" id="GO:0006633">
    <property type="term" value="P:fatty acid biosynthetic process"/>
    <property type="evidence" value="ECO:0000314"/>
    <property type="project" value="MGI"/>
</dbReference>
<dbReference type="FunFam" id="3.40.50.12780:FF:000007">
    <property type="entry name" value="Acyl-coenzyme A synthetase ACSM2A, mitochondrial"/>
    <property type="match status" value="1"/>
</dbReference>
<dbReference type="FunFam" id="3.30.300.30:FF:000005">
    <property type="entry name" value="Acyl-coenzyme A synthetase ACSM5, mitochondrial"/>
    <property type="match status" value="1"/>
</dbReference>
<dbReference type="Gene3D" id="3.30.300.30">
    <property type="match status" value="1"/>
</dbReference>
<dbReference type="Gene3D" id="3.40.50.12780">
    <property type="entry name" value="N-terminal domain of ligase-like"/>
    <property type="match status" value="1"/>
</dbReference>
<dbReference type="InterPro" id="IPR025110">
    <property type="entry name" value="AMP-bd_C"/>
</dbReference>
<dbReference type="InterPro" id="IPR045851">
    <property type="entry name" value="AMP-bd_C_sf"/>
</dbReference>
<dbReference type="InterPro" id="IPR020845">
    <property type="entry name" value="AMP-binding_CS"/>
</dbReference>
<dbReference type="InterPro" id="IPR000873">
    <property type="entry name" value="AMP-dep_synth/lig_dom"/>
</dbReference>
<dbReference type="InterPro" id="IPR042099">
    <property type="entry name" value="ANL_N_sf"/>
</dbReference>
<dbReference type="InterPro" id="IPR051087">
    <property type="entry name" value="Mitochondrial_ACSM"/>
</dbReference>
<dbReference type="PANTHER" id="PTHR43605">
    <property type="entry name" value="ACYL-COENZYME A SYNTHETASE"/>
    <property type="match status" value="1"/>
</dbReference>
<dbReference type="PANTHER" id="PTHR43605:SF5">
    <property type="entry name" value="ACYL-COENZYME A SYNTHETASE ACSM1, MITOCHONDRIAL"/>
    <property type="match status" value="1"/>
</dbReference>
<dbReference type="Pfam" id="PF00501">
    <property type="entry name" value="AMP-binding"/>
    <property type="match status" value="1"/>
</dbReference>
<dbReference type="Pfam" id="PF13193">
    <property type="entry name" value="AMP-binding_C"/>
    <property type="match status" value="1"/>
</dbReference>
<dbReference type="SUPFAM" id="SSF56801">
    <property type="entry name" value="Acetyl-CoA synthetase-like"/>
    <property type="match status" value="1"/>
</dbReference>
<dbReference type="PROSITE" id="PS00455">
    <property type="entry name" value="AMP_BINDING"/>
    <property type="match status" value="1"/>
</dbReference>
<accession>Q91VA0</accession>
<accession>Q3UED4</accession>
<protein>
    <recommendedName>
        <fullName>Acyl-coenzyme A synthetase ACSM1, mitochondrial</fullName>
        <ecNumber evidence="5 6">6.2.1.2</ecNumber>
    </recommendedName>
    <alternativeName>
        <fullName>Acyl-CoA synthetase medium-chain family member 1</fullName>
    </alternativeName>
    <alternativeName>
        <fullName>Benzoate--CoA ligase</fullName>
        <ecNumber evidence="5 6">6.2.1.25</ecNumber>
    </alternativeName>
    <alternativeName>
        <fullName>Butyrate--CoA ligase 1</fullName>
    </alternativeName>
    <alternativeName>
        <fullName>Butyryl-coenzyme A synthetase 1</fullName>
    </alternativeName>
    <alternativeName>
        <fullName evidence="3">Lipoate-activating enzyme</fullName>
    </alternativeName>
    <alternativeName>
        <fullName evidence="7">Middle-chain acyl-CoA synthetase 1</fullName>
    </alternativeName>
</protein>
<reference key="1">
    <citation type="journal article" date="2001" name="J. Biol. Chem.">
        <title>Molecular identification and characterization of two medium-chain acyl-CoA synthetases, MACS1 and the Sa gene product.</title>
        <authorList>
            <person name="Fujino T."/>
            <person name="Takei Y.A."/>
            <person name="Sone H."/>
            <person name="Ioka R.X."/>
            <person name="Kamataki A."/>
            <person name="Magoori K."/>
            <person name="Takahashi S."/>
            <person name="Sakai J."/>
            <person name="Yamamoto T.T."/>
        </authorList>
    </citation>
    <scope>NUCLEOTIDE SEQUENCE [MRNA] (ISOFORM 1)</scope>
    <scope>FUNCTION</scope>
    <scope>CATALYTIC ACTIVITY</scope>
    <scope>BIOPHYSICOCHEMICAL PROPERTIES</scope>
    <scope>SUBCELLULAR LOCATION</scope>
    <scope>TISSUE SPECIFICITY</scope>
    <source>
        <tissue>Kidney</tissue>
    </source>
</reference>
<reference key="2">
    <citation type="journal article" date="2005" name="Science">
        <title>The transcriptional landscape of the mammalian genome.</title>
        <authorList>
            <person name="Carninci P."/>
            <person name="Kasukawa T."/>
            <person name="Katayama S."/>
            <person name="Gough J."/>
            <person name="Frith M.C."/>
            <person name="Maeda N."/>
            <person name="Oyama R."/>
            <person name="Ravasi T."/>
            <person name="Lenhard B."/>
            <person name="Wells C."/>
            <person name="Kodzius R."/>
            <person name="Shimokawa K."/>
            <person name="Bajic V.B."/>
            <person name="Brenner S.E."/>
            <person name="Batalov S."/>
            <person name="Forrest A.R."/>
            <person name="Zavolan M."/>
            <person name="Davis M.J."/>
            <person name="Wilming L.G."/>
            <person name="Aidinis V."/>
            <person name="Allen J.E."/>
            <person name="Ambesi-Impiombato A."/>
            <person name="Apweiler R."/>
            <person name="Aturaliya R.N."/>
            <person name="Bailey T.L."/>
            <person name="Bansal M."/>
            <person name="Baxter L."/>
            <person name="Beisel K.W."/>
            <person name="Bersano T."/>
            <person name="Bono H."/>
            <person name="Chalk A.M."/>
            <person name="Chiu K.P."/>
            <person name="Choudhary V."/>
            <person name="Christoffels A."/>
            <person name="Clutterbuck D.R."/>
            <person name="Crowe M.L."/>
            <person name="Dalla E."/>
            <person name="Dalrymple B.P."/>
            <person name="de Bono B."/>
            <person name="Della Gatta G."/>
            <person name="di Bernardo D."/>
            <person name="Down T."/>
            <person name="Engstrom P."/>
            <person name="Fagiolini M."/>
            <person name="Faulkner G."/>
            <person name="Fletcher C.F."/>
            <person name="Fukushima T."/>
            <person name="Furuno M."/>
            <person name="Futaki S."/>
            <person name="Gariboldi M."/>
            <person name="Georgii-Hemming P."/>
            <person name="Gingeras T.R."/>
            <person name="Gojobori T."/>
            <person name="Green R.E."/>
            <person name="Gustincich S."/>
            <person name="Harbers M."/>
            <person name="Hayashi Y."/>
            <person name="Hensch T.K."/>
            <person name="Hirokawa N."/>
            <person name="Hill D."/>
            <person name="Huminiecki L."/>
            <person name="Iacono M."/>
            <person name="Ikeo K."/>
            <person name="Iwama A."/>
            <person name="Ishikawa T."/>
            <person name="Jakt M."/>
            <person name="Kanapin A."/>
            <person name="Katoh M."/>
            <person name="Kawasawa Y."/>
            <person name="Kelso J."/>
            <person name="Kitamura H."/>
            <person name="Kitano H."/>
            <person name="Kollias G."/>
            <person name="Krishnan S.P."/>
            <person name="Kruger A."/>
            <person name="Kummerfeld S.K."/>
            <person name="Kurochkin I.V."/>
            <person name="Lareau L.F."/>
            <person name="Lazarevic D."/>
            <person name="Lipovich L."/>
            <person name="Liu J."/>
            <person name="Liuni S."/>
            <person name="McWilliam S."/>
            <person name="Madan Babu M."/>
            <person name="Madera M."/>
            <person name="Marchionni L."/>
            <person name="Matsuda H."/>
            <person name="Matsuzawa S."/>
            <person name="Miki H."/>
            <person name="Mignone F."/>
            <person name="Miyake S."/>
            <person name="Morris K."/>
            <person name="Mottagui-Tabar S."/>
            <person name="Mulder N."/>
            <person name="Nakano N."/>
            <person name="Nakauchi H."/>
            <person name="Ng P."/>
            <person name="Nilsson R."/>
            <person name="Nishiguchi S."/>
            <person name="Nishikawa S."/>
            <person name="Nori F."/>
            <person name="Ohara O."/>
            <person name="Okazaki Y."/>
            <person name="Orlando V."/>
            <person name="Pang K.C."/>
            <person name="Pavan W.J."/>
            <person name="Pavesi G."/>
            <person name="Pesole G."/>
            <person name="Petrovsky N."/>
            <person name="Piazza S."/>
            <person name="Reed J."/>
            <person name="Reid J.F."/>
            <person name="Ring B.Z."/>
            <person name="Ringwald M."/>
            <person name="Rost B."/>
            <person name="Ruan Y."/>
            <person name="Salzberg S.L."/>
            <person name="Sandelin A."/>
            <person name="Schneider C."/>
            <person name="Schoenbach C."/>
            <person name="Sekiguchi K."/>
            <person name="Semple C.A."/>
            <person name="Seno S."/>
            <person name="Sessa L."/>
            <person name="Sheng Y."/>
            <person name="Shibata Y."/>
            <person name="Shimada H."/>
            <person name="Shimada K."/>
            <person name="Silva D."/>
            <person name="Sinclair B."/>
            <person name="Sperling S."/>
            <person name="Stupka E."/>
            <person name="Sugiura K."/>
            <person name="Sultana R."/>
            <person name="Takenaka Y."/>
            <person name="Taki K."/>
            <person name="Tammoja K."/>
            <person name="Tan S.L."/>
            <person name="Tang S."/>
            <person name="Taylor M.S."/>
            <person name="Tegner J."/>
            <person name="Teichmann S.A."/>
            <person name="Ueda H.R."/>
            <person name="van Nimwegen E."/>
            <person name="Verardo R."/>
            <person name="Wei C.L."/>
            <person name="Yagi K."/>
            <person name="Yamanishi H."/>
            <person name="Zabarovsky E."/>
            <person name="Zhu S."/>
            <person name="Zimmer A."/>
            <person name="Hide W."/>
            <person name="Bult C."/>
            <person name="Grimmond S.M."/>
            <person name="Teasdale R.D."/>
            <person name="Liu E.T."/>
            <person name="Brusic V."/>
            <person name="Quackenbush J."/>
            <person name="Wahlestedt C."/>
            <person name="Mattick J.S."/>
            <person name="Hume D.A."/>
            <person name="Kai C."/>
            <person name="Sasaki D."/>
            <person name="Tomaru Y."/>
            <person name="Fukuda S."/>
            <person name="Kanamori-Katayama M."/>
            <person name="Suzuki M."/>
            <person name="Aoki J."/>
            <person name="Arakawa T."/>
            <person name="Iida J."/>
            <person name="Imamura K."/>
            <person name="Itoh M."/>
            <person name="Kato T."/>
            <person name="Kawaji H."/>
            <person name="Kawagashira N."/>
            <person name="Kawashima T."/>
            <person name="Kojima M."/>
            <person name="Kondo S."/>
            <person name="Konno H."/>
            <person name="Nakano K."/>
            <person name="Ninomiya N."/>
            <person name="Nishio T."/>
            <person name="Okada M."/>
            <person name="Plessy C."/>
            <person name="Shibata K."/>
            <person name="Shiraki T."/>
            <person name="Suzuki S."/>
            <person name="Tagami M."/>
            <person name="Waki K."/>
            <person name="Watahiki A."/>
            <person name="Okamura-Oho Y."/>
            <person name="Suzuki H."/>
            <person name="Kawai J."/>
            <person name="Hayashizaki Y."/>
        </authorList>
    </citation>
    <scope>NUCLEOTIDE SEQUENCE [LARGE SCALE MRNA] (ISOFORMS 1 AND 2)</scope>
    <source>
        <strain>C57BL/6J</strain>
        <tissue>Liver</tissue>
    </source>
</reference>
<reference key="3">
    <citation type="journal article" date="2004" name="Genome Res.">
        <title>The status, quality, and expansion of the NIH full-length cDNA project: the Mammalian Gene Collection (MGC).</title>
        <authorList>
            <consortium name="The MGC Project Team"/>
        </authorList>
    </citation>
    <scope>NUCLEOTIDE SEQUENCE [LARGE SCALE MRNA] (ISOFORM 1)</scope>
    <source>
        <strain>FVB/N</strain>
        <tissue>Kidney</tissue>
        <tissue>Liver</tissue>
    </source>
</reference>
<reference key="4">
    <citation type="submission" date="2009-01" db="UniProtKB">
        <authorList>
            <person name="Lubec G."/>
            <person name="Sunyer B."/>
            <person name="Chen W.-Q."/>
        </authorList>
    </citation>
    <scope>PROTEIN SEQUENCE OF 249-254</scope>
    <scope>IDENTIFICATION BY MASS SPECTROMETRY</scope>
    <source>
        <strain>OF1</strain>
        <tissue>Hippocampus</tissue>
    </source>
</reference>
<reference key="5">
    <citation type="journal article" date="2003" name="Eur. J. Biochem.">
        <title>O-MACS, a novel member of the medium-chain acyl-CoA synthetase family, specifically expressed in the olfactory epithelium in a zone-specific manner.</title>
        <authorList>
            <person name="Oka Y."/>
            <person name="Kobayakawa K."/>
            <person name="Nishizumi H."/>
            <person name="Miyamichi K."/>
            <person name="Hirose S."/>
            <person name="Tsuboi A."/>
            <person name="Sakano H."/>
        </authorList>
    </citation>
    <scope>FUNCTION</scope>
    <scope>CATALYTIC ACTIVITY</scope>
    <scope>SUBCELLULAR LOCATION</scope>
</reference>
<reference key="6">
    <citation type="journal article" date="2006" name="Protein Expr. Purif.">
        <title>Purification, characterization, and mass spectrometric sequencing of a medium chain acyl-CoA synthetase from mouse liver mitochondria and comparisons with the homologues of rat and bovine.</title>
        <authorList>
            <person name="Kasuya F."/>
            <person name="Tatsuki T."/>
            <person name="Ohta M."/>
            <person name="Kawai Y."/>
            <person name="Igarashi K."/>
        </authorList>
    </citation>
    <scope>IDENTIFICATION BY MASS SPECTROMETRY</scope>
</reference>
<reference key="7">
    <citation type="journal article" date="2010" name="Cell">
        <title>A tissue-specific atlas of mouse protein phosphorylation and expression.</title>
        <authorList>
            <person name="Huttlin E.L."/>
            <person name="Jedrychowski M.P."/>
            <person name="Elias J.E."/>
            <person name="Goswami T."/>
            <person name="Rad R."/>
            <person name="Beausoleil S.A."/>
            <person name="Villen J."/>
            <person name="Haas W."/>
            <person name="Sowa M.E."/>
            <person name="Gygi S.P."/>
        </authorList>
    </citation>
    <scope>IDENTIFICATION BY MASS SPECTROMETRY [LARGE SCALE ANALYSIS]</scope>
    <source>
        <tissue>Kidney</tissue>
        <tissue>Liver</tissue>
        <tissue>Lung</tissue>
    </source>
</reference>
<reference key="8">
    <citation type="journal article" date="2013" name="Mol. Cell">
        <title>SIRT5-mediated lysine desuccinylation impacts diverse metabolic pathways.</title>
        <authorList>
            <person name="Park J."/>
            <person name="Chen Y."/>
            <person name="Tishkoff D.X."/>
            <person name="Peng C."/>
            <person name="Tan M."/>
            <person name="Dai L."/>
            <person name="Xie Z."/>
            <person name="Zhang Y."/>
            <person name="Zwaans B.M."/>
            <person name="Skinner M.E."/>
            <person name="Lombard D.B."/>
            <person name="Zhao Y."/>
        </authorList>
    </citation>
    <scope>SUCCINYLATION [LARGE SCALE ANALYSIS] AT LYS-81; LYS-142; LYS-179; LYS-200; LYS-233; LYS-324; LYS-352; LYS-387; LYS-501 AND LYS-534</scope>
    <scope>IDENTIFICATION BY MASS SPECTROMETRY [LARGE SCALE ANALYSIS]</scope>
    <source>
        <tissue>Liver</tissue>
    </source>
</reference>
<reference key="9">
    <citation type="journal article" date="2013" name="Proc. Natl. Acad. Sci. U.S.A.">
        <title>Label-free quantitative proteomics of the lysine acetylome in mitochondria identifies substrates of SIRT3 in metabolic pathways.</title>
        <authorList>
            <person name="Rardin M.J."/>
            <person name="Newman J.C."/>
            <person name="Held J.M."/>
            <person name="Cusack M.P."/>
            <person name="Sorensen D.J."/>
            <person name="Li B."/>
            <person name="Schilling B."/>
            <person name="Mooney S.D."/>
            <person name="Kahn C.R."/>
            <person name="Verdin E."/>
            <person name="Gibson B.W."/>
        </authorList>
    </citation>
    <scope>ACETYLATION [LARGE SCALE ANALYSIS] AT LYS-142; LYS-200; LYS-210; LYS-352; LYS-387; LYS-527; LYS-534 AND LYS-545</scope>
    <scope>IDENTIFICATION BY MASS SPECTROMETRY [LARGE SCALE ANALYSIS]</scope>
    <source>
        <tissue>Liver</tissue>
    </source>
</reference>
<gene>
    <name type="primary">Acsm1</name>
    <name type="synonym">Bucs1</name>
    <name evidence="3" type="synonym">Lae</name>
    <name evidence="7" type="synonym">Macs1</name>
</gene>
<name>ACSM1_MOUSE</name>
<evidence type="ECO:0000250" key="1"/>
<evidence type="ECO:0000250" key="2">
    <source>
        <dbReference type="UniProtKB" id="Q08AH1"/>
    </source>
</evidence>
<evidence type="ECO:0000250" key="3">
    <source>
        <dbReference type="UniProtKB" id="Q9BEA2"/>
    </source>
</evidence>
<evidence type="ECO:0000255" key="4"/>
<evidence type="ECO:0000269" key="5">
    <source>
    </source>
</evidence>
<evidence type="ECO:0000269" key="6">
    <source>
    </source>
</evidence>
<evidence type="ECO:0000303" key="7">
    <source>
    </source>
</evidence>
<evidence type="ECO:0000303" key="8">
    <source>
    </source>
</evidence>
<evidence type="ECO:0000305" key="9"/>
<evidence type="ECO:0000305" key="10">
    <source>
    </source>
</evidence>
<evidence type="ECO:0000305" key="11">
    <source>
    </source>
</evidence>
<evidence type="ECO:0007744" key="12">
    <source>
    </source>
</evidence>
<evidence type="ECO:0007744" key="13">
    <source>
    </source>
</evidence>
<sequence>MQWLKSFQICKVLQGFSLSPTQLHRRLFSRVGAPRWNDHDSPEEFNFASDVLDYWAQMEEEGKRGPSPAFWWVNGQGDEIKWSFRKLRDLTCRTANVFEQICGLQQGDHLALILPRVPEWWLVTVGCMRTGIIFMPGTTQLKAKDILYRIQISRAKAIVTTASLVPEVESVASECPDLKTKLVVSDHSHEGWLDFCSLIKSASPDHTCIKSKMKDPMAIFFTSGTTGYPKMAKHNQGLAFRSYIPSCRKLLKLKTSDILWCMSDPGWILATVGCLIEPWTSGCTVFIHHLPQFDPKVIVEVLFKYPITQCLAAPGVYRMVLQQKTSNLRFPTLEHCTTGGESLLPEEYEQWKQRTGLSIHEVYGQSETGISSATLREMKIKRGSIGKAILPFDLQIIDEKGNILPPNTEGYIGIRIKPTRPLGLFMEYENSPESTSEVECGDFYNSGDRATIDEEGYIWFLGRGDDVINASGYRIGPVEVENALAEHPAVAESAVVSSPDKDRGEVVKAFIVLNPEFLSHDQEQLIKELQHHVKSVTAPYKYPRKVEFVSELPKTVTGKIKRKELRNKEFGQL</sequence>